<sequence length="334" mass="36612">MATLKEKLIAPVADDETAVPNNKITVVGVGQVGMACAISILGKSLADELALVDVLEDKLKGEMMDLQHGSLFLQTPKIVADKDYSVTANSKIVVVTAGVRQQEGESRLNLVQRNVNVFKFIIPQIVKYSPDCTIIVVSNPVDILTYVTWKLSGLPKHRVIGSGCNLDSARFRYLMAEKLGIHPSSCHGWILGEHGDSSVAVWSGVNVAGVSLQELNPEMGTDNDSENWKEVHKMVVDSAYEVIKLKGYTNWAIGLSVADLIESMLKNLSRIHPVSTMVKGMYGIENEVFLSLPCILNARGLTSVINQKLKDDEVAQLRKSADTLWDIQKDLKDL</sequence>
<comment type="function">
    <text evidence="2">Interconverts simultaneously and stereospecifically pyruvate and lactate with concomitant interconversion of NADH and NAD(+).</text>
</comment>
<comment type="catalytic activity">
    <reaction evidence="2">
        <text>(S)-lactate + NAD(+) = pyruvate + NADH + H(+)</text>
        <dbReference type="Rhea" id="RHEA:23444"/>
        <dbReference type="ChEBI" id="CHEBI:15361"/>
        <dbReference type="ChEBI" id="CHEBI:15378"/>
        <dbReference type="ChEBI" id="CHEBI:16651"/>
        <dbReference type="ChEBI" id="CHEBI:57540"/>
        <dbReference type="ChEBI" id="CHEBI:57945"/>
        <dbReference type="EC" id="1.1.1.27"/>
    </reaction>
    <physiologicalReaction direction="left-to-right" evidence="2">
        <dbReference type="Rhea" id="RHEA:23445"/>
    </physiologicalReaction>
    <physiologicalReaction direction="right-to-left" evidence="2">
        <dbReference type="Rhea" id="RHEA:23446"/>
    </physiologicalReaction>
</comment>
<comment type="pathway">
    <text evidence="2">Fermentation; pyruvate fermentation to lactate; (S)-lactate from pyruvate: step 1/1.</text>
</comment>
<comment type="subunit">
    <text evidence="2">Homotetramer. Interacts with PTEN upstream reading frame protein MP31; the interaction leads to inhibition of mitochondrial lactate dehydrogenase activity, preventing conversion of lactate to pyruvate in mitochondria.</text>
</comment>
<comment type="subcellular location">
    <subcellularLocation>
        <location>Cytoplasm</location>
    </subcellularLocation>
    <subcellularLocation>
        <location evidence="2">Mitochondrion inner membrane</location>
        <topology evidence="3">Peripheral membrane protein</topology>
    </subcellularLocation>
</comment>
<comment type="similarity">
    <text evidence="3">Belongs to the LDH/MDH superfamily. LDH family.</text>
</comment>
<dbReference type="EC" id="1.1.1.27" evidence="2"/>
<dbReference type="EMBL" id="U07181">
    <property type="protein sequence ID" value="AAA50439.1"/>
    <property type="molecule type" value="mRNA"/>
</dbReference>
<dbReference type="EMBL" id="BC059149">
    <property type="protein sequence ID" value="AAH59149.1"/>
    <property type="molecule type" value="mRNA"/>
</dbReference>
<dbReference type="PIR" id="I62761">
    <property type="entry name" value="I62761"/>
</dbReference>
<dbReference type="RefSeq" id="NP_001303262.1">
    <property type="nucleotide sequence ID" value="NM_001316333.1"/>
</dbReference>
<dbReference type="RefSeq" id="NP_001303263.1">
    <property type="nucleotide sequence ID" value="NM_001316334.1"/>
</dbReference>
<dbReference type="RefSeq" id="NP_036727.1">
    <property type="nucleotide sequence ID" value="NM_012595.2"/>
</dbReference>
<dbReference type="SMR" id="P42123"/>
<dbReference type="BioGRID" id="246687">
    <property type="interactions" value="6"/>
</dbReference>
<dbReference type="FunCoup" id="P42123">
    <property type="interactions" value="1132"/>
</dbReference>
<dbReference type="IntAct" id="P42123">
    <property type="interactions" value="4"/>
</dbReference>
<dbReference type="MINT" id="P42123"/>
<dbReference type="STRING" id="10116.ENSRNOP00000017965"/>
<dbReference type="ChEMBL" id="CHEMBL2176834"/>
<dbReference type="GlyGen" id="P42123">
    <property type="glycosylation" value="1 site, 1 O-linked glycan (1 site)"/>
</dbReference>
<dbReference type="iPTMnet" id="P42123"/>
<dbReference type="PhosphoSitePlus" id="P42123"/>
<dbReference type="SwissPalm" id="P42123"/>
<dbReference type="jPOST" id="P42123"/>
<dbReference type="PaxDb" id="10116-ENSRNOP00000017965"/>
<dbReference type="Ensembl" id="ENSRNOT00000017965.8">
    <property type="protein sequence ID" value="ENSRNOP00000017965.4"/>
    <property type="gene ID" value="ENSRNOG00000013000.8"/>
</dbReference>
<dbReference type="GeneID" id="24534"/>
<dbReference type="KEGG" id="rno:24534"/>
<dbReference type="UCSC" id="RGD:2997">
    <property type="organism name" value="rat"/>
</dbReference>
<dbReference type="AGR" id="RGD:2997"/>
<dbReference type="CTD" id="3945"/>
<dbReference type="RGD" id="2997">
    <property type="gene designation" value="Ldhb"/>
</dbReference>
<dbReference type="eggNOG" id="KOG1495">
    <property type="taxonomic scope" value="Eukaryota"/>
</dbReference>
<dbReference type="GeneTree" id="ENSGT00940000153525"/>
<dbReference type="HOGENOM" id="CLU_045401_0_2_1"/>
<dbReference type="InParanoid" id="P42123"/>
<dbReference type="OMA" id="THLDSMR"/>
<dbReference type="OrthoDB" id="5405561at2759"/>
<dbReference type="PhylomeDB" id="P42123"/>
<dbReference type="TreeFam" id="TF314963"/>
<dbReference type="Reactome" id="R-RNO-70268">
    <property type="pathway name" value="Pyruvate metabolism"/>
</dbReference>
<dbReference type="UniPathway" id="UPA00554">
    <property type="reaction ID" value="UER00611"/>
</dbReference>
<dbReference type="PRO" id="PR:P42123"/>
<dbReference type="Proteomes" id="UP000002494">
    <property type="component" value="Chromosome 4"/>
</dbReference>
<dbReference type="Bgee" id="ENSRNOG00000013000">
    <property type="expression patterns" value="Expressed in heart and 20 other cell types or tissues"/>
</dbReference>
<dbReference type="GO" id="GO:0005829">
    <property type="term" value="C:cytosol"/>
    <property type="evidence" value="ECO:0000266"/>
    <property type="project" value="RGD"/>
</dbReference>
<dbReference type="GO" id="GO:0045121">
    <property type="term" value="C:membrane raft"/>
    <property type="evidence" value="ECO:0000266"/>
    <property type="project" value="RGD"/>
</dbReference>
<dbReference type="GO" id="GO:0005743">
    <property type="term" value="C:mitochondrial inner membrane"/>
    <property type="evidence" value="ECO:0000250"/>
    <property type="project" value="UniProtKB"/>
</dbReference>
<dbReference type="GO" id="GO:0005739">
    <property type="term" value="C:mitochondrion"/>
    <property type="evidence" value="ECO:0000318"/>
    <property type="project" value="GO_Central"/>
</dbReference>
<dbReference type="GO" id="GO:1990204">
    <property type="term" value="C:oxidoreductase complex"/>
    <property type="evidence" value="ECO:0000266"/>
    <property type="project" value="RGD"/>
</dbReference>
<dbReference type="GO" id="GO:0042802">
    <property type="term" value="F:identical protein binding"/>
    <property type="evidence" value="ECO:0000314"/>
    <property type="project" value="RGD"/>
</dbReference>
<dbReference type="GO" id="GO:0019900">
    <property type="term" value="F:kinase binding"/>
    <property type="evidence" value="ECO:0000353"/>
    <property type="project" value="RGD"/>
</dbReference>
<dbReference type="GO" id="GO:0004459">
    <property type="term" value="F:L-lactate dehydrogenase activity"/>
    <property type="evidence" value="ECO:0000314"/>
    <property type="project" value="RGD"/>
</dbReference>
<dbReference type="GO" id="GO:0004457">
    <property type="term" value="F:lactate dehydrogenase activity"/>
    <property type="evidence" value="ECO:0000314"/>
    <property type="project" value="RGD"/>
</dbReference>
<dbReference type="GO" id="GO:0051287">
    <property type="term" value="F:NAD binding"/>
    <property type="evidence" value="ECO:0000314"/>
    <property type="project" value="RGD"/>
</dbReference>
<dbReference type="GO" id="GO:0006089">
    <property type="term" value="P:lactate metabolic process"/>
    <property type="evidence" value="ECO:0000314"/>
    <property type="project" value="RGD"/>
</dbReference>
<dbReference type="GO" id="GO:0019674">
    <property type="term" value="P:NAD metabolic process"/>
    <property type="evidence" value="ECO:0000314"/>
    <property type="project" value="RGD"/>
</dbReference>
<dbReference type="GO" id="GO:0006090">
    <property type="term" value="P:pyruvate metabolic process"/>
    <property type="evidence" value="ECO:0000266"/>
    <property type="project" value="RGD"/>
</dbReference>
<dbReference type="CDD" id="cd05293">
    <property type="entry name" value="LDH_1"/>
    <property type="match status" value="1"/>
</dbReference>
<dbReference type="FunFam" id="3.40.50.720:FF:000029">
    <property type="entry name" value="L-lactate dehydrogenase A chain"/>
    <property type="match status" value="1"/>
</dbReference>
<dbReference type="FunFam" id="3.90.110.10:FF:000003">
    <property type="entry name" value="L-lactate dehydrogenase A chain"/>
    <property type="match status" value="1"/>
</dbReference>
<dbReference type="Gene3D" id="3.90.110.10">
    <property type="entry name" value="Lactate dehydrogenase/glycoside hydrolase, family 4, C-terminal"/>
    <property type="match status" value="1"/>
</dbReference>
<dbReference type="Gene3D" id="3.40.50.720">
    <property type="entry name" value="NAD(P)-binding Rossmann-like Domain"/>
    <property type="match status" value="1"/>
</dbReference>
<dbReference type="HAMAP" id="MF_00488">
    <property type="entry name" value="Lactate_dehydrog"/>
    <property type="match status" value="1"/>
</dbReference>
<dbReference type="InterPro" id="IPR001557">
    <property type="entry name" value="L-lactate/malate_DH"/>
</dbReference>
<dbReference type="InterPro" id="IPR011304">
    <property type="entry name" value="L-lactate_DH"/>
</dbReference>
<dbReference type="InterPro" id="IPR018177">
    <property type="entry name" value="L-lactate_DH_AS"/>
</dbReference>
<dbReference type="InterPro" id="IPR022383">
    <property type="entry name" value="Lactate/malate_DH_C"/>
</dbReference>
<dbReference type="InterPro" id="IPR001236">
    <property type="entry name" value="Lactate/malate_DH_N"/>
</dbReference>
<dbReference type="InterPro" id="IPR015955">
    <property type="entry name" value="Lactate_DH/Glyco_Ohase_4_C"/>
</dbReference>
<dbReference type="InterPro" id="IPR036291">
    <property type="entry name" value="NAD(P)-bd_dom_sf"/>
</dbReference>
<dbReference type="NCBIfam" id="TIGR01771">
    <property type="entry name" value="L-LDH-NAD"/>
    <property type="match status" value="1"/>
</dbReference>
<dbReference type="NCBIfam" id="NF000824">
    <property type="entry name" value="PRK00066.1"/>
    <property type="match status" value="1"/>
</dbReference>
<dbReference type="PANTHER" id="PTHR43128">
    <property type="entry name" value="L-2-HYDROXYCARBOXYLATE DEHYDROGENASE (NAD(P)(+))"/>
    <property type="match status" value="1"/>
</dbReference>
<dbReference type="PANTHER" id="PTHR43128:SF2">
    <property type="entry name" value="L-LACTATE DEHYDROGENASE B CHAIN"/>
    <property type="match status" value="1"/>
</dbReference>
<dbReference type="Pfam" id="PF02866">
    <property type="entry name" value="Ldh_1_C"/>
    <property type="match status" value="1"/>
</dbReference>
<dbReference type="Pfam" id="PF00056">
    <property type="entry name" value="Ldh_1_N"/>
    <property type="match status" value="1"/>
</dbReference>
<dbReference type="PIRSF" id="PIRSF000102">
    <property type="entry name" value="Lac_mal_DH"/>
    <property type="match status" value="1"/>
</dbReference>
<dbReference type="PRINTS" id="PR00086">
    <property type="entry name" value="LLDHDRGNASE"/>
</dbReference>
<dbReference type="SUPFAM" id="SSF56327">
    <property type="entry name" value="LDH C-terminal domain-like"/>
    <property type="match status" value="1"/>
</dbReference>
<dbReference type="SUPFAM" id="SSF51735">
    <property type="entry name" value="NAD(P)-binding Rossmann-fold domains"/>
    <property type="match status" value="1"/>
</dbReference>
<dbReference type="PROSITE" id="PS00064">
    <property type="entry name" value="L_LDH"/>
    <property type="match status" value="1"/>
</dbReference>
<name>LDHB_RAT</name>
<keyword id="KW-0007">Acetylation</keyword>
<keyword id="KW-0963">Cytoplasm</keyword>
<keyword id="KW-0903">Direct protein sequencing</keyword>
<keyword id="KW-0472">Membrane</keyword>
<keyword id="KW-0496">Mitochondrion</keyword>
<keyword id="KW-0999">Mitochondrion inner membrane</keyword>
<keyword id="KW-0520">NAD</keyword>
<keyword id="KW-0560">Oxidoreductase</keyword>
<keyword id="KW-0597">Phosphoprotein</keyword>
<keyword id="KW-1185">Reference proteome</keyword>
<reference key="1">
    <citation type="journal article" date="1994" name="Proc. Natl. Acad. Sci. U.S.A.">
        <title>Evolutionary relationships of lactate dehydrogenases (LDHs) from mammals, birds, an amphibian, fish, barley, and bacteria: LDH cDNA sequences from Xenopus, pig, and rat.</title>
        <authorList>
            <person name="Tsuji S."/>
            <person name="Qureshi M.A."/>
            <person name="Hou E.W."/>
            <person name="Fitch W.M."/>
            <person name="Li S.S.-L."/>
        </authorList>
    </citation>
    <scope>NUCLEOTIDE SEQUENCE [MRNA]</scope>
    <source>
        <tissue>Heart</tissue>
    </source>
</reference>
<reference key="2">
    <citation type="journal article" date="2004" name="Genome Res.">
        <title>The status, quality, and expansion of the NIH full-length cDNA project: the Mammalian Gene Collection (MGC).</title>
        <authorList>
            <consortium name="The MGC Project Team"/>
        </authorList>
    </citation>
    <scope>NUCLEOTIDE SEQUENCE [LARGE SCALE MRNA]</scope>
    <source>
        <tissue>Pituitary</tissue>
    </source>
</reference>
<reference key="3">
    <citation type="submission" date="2007-07" db="UniProtKB">
        <authorList>
            <person name="Lubec G."/>
            <person name="Afjehi-Sadat L."/>
            <person name="Chen W.-Q."/>
            <person name="Kang S.U."/>
        </authorList>
    </citation>
    <scope>PROTEIN SEQUENCE OF 24-91; 120-127 AND 159-170</scope>
    <scope>IDENTIFICATION BY MASS SPECTROMETRY</scope>
    <source>
        <strain>Sprague-Dawley</strain>
        <tissue>Brain</tissue>
        <tissue>Hippocampus</tissue>
        <tissue>Spinal cord</tissue>
    </source>
</reference>
<reference key="4">
    <citation type="journal article" date="2012" name="Nat. Commun.">
        <title>Quantitative maps of protein phosphorylation sites across 14 different rat organs and tissues.</title>
        <authorList>
            <person name="Lundby A."/>
            <person name="Secher A."/>
            <person name="Lage K."/>
            <person name="Nordsborg N.B."/>
            <person name="Dmytriyev A."/>
            <person name="Lundby C."/>
            <person name="Olsen J.V."/>
        </authorList>
    </citation>
    <scope>PHOSPHORYLATION [LARGE SCALE ANALYSIS] AT SER-44</scope>
    <scope>IDENTIFICATION BY MASS SPECTROMETRY [LARGE SCALE ANALYSIS]</scope>
</reference>
<protein>
    <recommendedName>
        <fullName>L-lactate dehydrogenase B chain</fullName>
        <shortName>LDH-B</shortName>
        <ecNumber evidence="2">1.1.1.27</ecNumber>
    </recommendedName>
    <alternativeName>
        <fullName>LDH heart subunit</fullName>
        <shortName>LDH-H</shortName>
    </alternativeName>
</protein>
<proteinExistence type="evidence at protein level"/>
<evidence type="ECO:0000250" key="1"/>
<evidence type="ECO:0000250" key="2">
    <source>
        <dbReference type="UniProtKB" id="P07195"/>
    </source>
</evidence>
<evidence type="ECO:0000305" key="3"/>
<evidence type="ECO:0007744" key="4">
    <source>
    </source>
</evidence>
<gene>
    <name type="primary">Ldhb</name>
    <name type="synonym">Ldh-2</name>
    <name type="synonym">Ldh2</name>
</gene>
<accession>P42123</accession>
<feature type="initiator methionine" description="Removed" evidence="2">
    <location>
        <position position="1"/>
    </location>
</feature>
<feature type="chain" id="PRO_0000168464" description="L-lactate dehydrogenase B chain">
    <location>
        <begin position="2"/>
        <end position="334"/>
    </location>
</feature>
<feature type="active site" description="Proton acceptor" evidence="1">
    <location>
        <position position="194"/>
    </location>
</feature>
<feature type="binding site" evidence="1">
    <location>
        <begin position="30"/>
        <end position="58"/>
    </location>
    <ligand>
        <name>NAD(+)</name>
        <dbReference type="ChEBI" id="CHEBI:57540"/>
    </ligand>
</feature>
<feature type="binding site" evidence="1">
    <location>
        <position position="100"/>
    </location>
    <ligand>
        <name>NAD(+)</name>
        <dbReference type="ChEBI" id="CHEBI:57540"/>
    </ligand>
</feature>
<feature type="binding site" evidence="1">
    <location>
        <position position="107"/>
    </location>
    <ligand>
        <name>substrate</name>
    </ligand>
</feature>
<feature type="binding site" evidence="1">
    <location>
        <position position="139"/>
    </location>
    <ligand>
        <name>NAD(+)</name>
        <dbReference type="ChEBI" id="CHEBI:57540"/>
    </ligand>
</feature>
<feature type="binding site" evidence="1">
    <location>
        <position position="139"/>
    </location>
    <ligand>
        <name>substrate</name>
    </ligand>
</feature>
<feature type="binding site" evidence="1">
    <location>
        <position position="170"/>
    </location>
    <ligand>
        <name>substrate</name>
    </ligand>
</feature>
<feature type="binding site" evidence="1">
    <location>
        <position position="249"/>
    </location>
    <ligand>
        <name>substrate</name>
    </ligand>
</feature>
<feature type="modified residue" description="N-acetylalanine" evidence="2">
    <location>
        <position position="2"/>
    </location>
</feature>
<feature type="modified residue" description="N6-acetyllysine" evidence="2">
    <location>
        <position position="7"/>
    </location>
</feature>
<feature type="modified residue" description="Phosphoserine" evidence="4">
    <location>
        <position position="44"/>
    </location>
</feature>
<feature type="modified residue" description="N6-acetyllysine" evidence="2">
    <location>
        <position position="58"/>
    </location>
</feature>
<feature type="modified residue" description="N6-acetyllysine" evidence="2">
    <location>
        <position position="119"/>
    </location>
</feature>
<feature type="modified residue" description="Phosphotyrosine" evidence="2">
    <location>
        <position position="240"/>
    </location>
</feature>
<feature type="modified residue" description="N6-acetyllysine" evidence="2">
    <location>
        <position position="329"/>
    </location>
</feature>
<organism>
    <name type="scientific">Rattus norvegicus</name>
    <name type="common">Rat</name>
    <dbReference type="NCBI Taxonomy" id="10116"/>
    <lineage>
        <taxon>Eukaryota</taxon>
        <taxon>Metazoa</taxon>
        <taxon>Chordata</taxon>
        <taxon>Craniata</taxon>
        <taxon>Vertebrata</taxon>
        <taxon>Euteleostomi</taxon>
        <taxon>Mammalia</taxon>
        <taxon>Eutheria</taxon>
        <taxon>Euarchontoglires</taxon>
        <taxon>Glires</taxon>
        <taxon>Rodentia</taxon>
        <taxon>Myomorpha</taxon>
        <taxon>Muroidea</taxon>
        <taxon>Muridae</taxon>
        <taxon>Murinae</taxon>
        <taxon>Rattus</taxon>
    </lineage>
</organism>